<name>NU1M_DROPE</name>
<gene>
    <name type="primary">mt:ND1</name>
    <name type="synonym">ND1</name>
</gene>
<geneLocation type="mitochondrion"/>
<organism>
    <name type="scientific">Drosophila persimilis</name>
    <name type="common">Fruit fly</name>
    <dbReference type="NCBI Taxonomy" id="7234"/>
    <lineage>
        <taxon>Eukaryota</taxon>
        <taxon>Metazoa</taxon>
        <taxon>Ecdysozoa</taxon>
        <taxon>Arthropoda</taxon>
        <taxon>Hexapoda</taxon>
        <taxon>Insecta</taxon>
        <taxon>Pterygota</taxon>
        <taxon>Neoptera</taxon>
        <taxon>Endopterygota</taxon>
        <taxon>Diptera</taxon>
        <taxon>Brachycera</taxon>
        <taxon>Muscomorpha</taxon>
        <taxon>Ephydroidea</taxon>
        <taxon>Drosophilidae</taxon>
        <taxon>Drosophila</taxon>
        <taxon>Sophophora</taxon>
    </lineage>
</organism>
<protein>
    <recommendedName>
        <fullName>NADH-ubiquinone oxidoreductase chain 1</fullName>
        <ecNumber>7.1.1.2</ecNumber>
    </recommendedName>
    <alternativeName>
        <fullName>NADH dehydrogenase subunit 1</fullName>
    </alternativeName>
</protein>
<keyword id="KW-0249">Electron transport</keyword>
<keyword id="KW-0472">Membrane</keyword>
<keyword id="KW-0496">Mitochondrion</keyword>
<keyword id="KW-0999">Mitochondrion inner membrane</keyword>
<keyword id="KW-0520">NAD</keyword>
<keyword id="KW-1185">Reference proteome</keyword>
<keyword id="KW-0679">Respiratory chain</keyword>
<keyword id="KW-1278">Translocase</keyword>
<keyword id="KW-0812">Transmembrane</keyword>
<keyword id="KW-1133">Transmembrane helix</keyword>
<keyword id="KW-0813">Transport</keyword>
<keyword id="KW-0830">Ubiquinone</keyword>
<proteinExistence type="inferred from homology"/>
<feature type="chain" id="PRO_0000117396" description="NADH-ubiquinone oxidoreductase chain 1">
    <location>
        <begin position="1"/>
        <end position="315"/>
    </location>
</feature>
<feature type="transmembrane region" description="Helical" evidence="2">
    <location>
        <begin position="6"/>
        <end position="26"/>
    </location>
</feature>
<feature type="transmembrane region" description="Helical" evidence="2">
    <location>
        <begin position="80"/>
        <end position="100"/>
    </location>
</feature>
<feature type="transmembrane region" description="Helical" evidence="2">
    <location>
        <begin position="107"/>
        <end position="127"/>
    </location>
</feature>
<feature type="transmembrane region" description="Helical" evidence="2">
    <location>
        <begin position="153"/>
        <end position="173"/>
    </location>
</feature>
<feature type="transmembrane region" description="Helical" evidence="2">
    <location>
        <begin position="177"/>
        <end position="197"/>
    </location>
</feature>
<feature type="transmembrane region" description="Helical" evidence="2">
    <location>
        <begin position="229"/>
        <end position="249"/>
    </location>
</feature>
<feature type="transmembrane region" description="Helical" evidence="2">
    <location>
        <begin position="253"/>
        <end position="273"/>
    </location>
</feature>
<feature type="transmembrane region" description="Helical" evidence="2">
    <location>
        <begin position="292"/>
        <end position="312"/>
    </location>
</feature>
<reference key="1">
    <citation type="journal article" date="2007" name="Nature">
        <title>Evolution of genes and genomes on the Drosophila phylogeny.</title>
        <authorList>
            <consortium name="Drosophila 12 genomes consortium"/>
        </authorList>
    </citation>
    <scope>NUCLEOTIDE SEQUENCE [LARGE SCALE GENOMIC DNA]</scope>
    <source>
        <strain>MSH-3 / Tucson 14011-0111.49</strain>
    </source>
</reference>
<reference key="2">
    <citation type="journal article" date="1994" name="J. Mol. Evol.">
        <title>Phylogeny of the Drosophila obscura species group deduced from mitochondrial DNA sequences.</title>
        <authorList>
            <person name="Barrio E."/>
            <person name="Latorre A."/>
            <person name="Moya A."/>
        </authorList>
    </citation>
    <scope>NUCLEOTIDE SEQUENCE [GENOMIC DNA] OF 1-155 AND 305-315</scope>
</reference>
<reference key="3">
    <citation type="journal article" date="2009" name="J. Mol. Evol.">
        <title>Comparative genomics of Drosophila mtDNA: Novel features of conservation and change across functional domains and lineages.</title>
        <authorList>
            <person name="Montooth K.L."/>
            <person name="Abt D.N."/>
            <person name="Hofmann J.W."/>
            <person name="Rand D.M."/>
        </authorList>
    </citation>
    <scope>IDENTIFICATION</scope>
    <source>
        <strain>MSH-3 / Tucson 14011-0111.49</strain>
    </source>
</reference>
<sequence>MFYMEFILSLIGSLLLIICVLVSVAFLTLLERKVLGYIQIRKGPNKVGLMGIPQPFCDAIKLFTKEQTYPLLSNYLSYYISPIFSLFLSLFVWMCMPFFVKLYSFNLGGLFFLCCTSLGVYTVMIAGWSSNSNYALLGGLRAVAQTISYEVSLALILLSFVFLIGSYNMMYFFYYQIYIWFLIILFPMALVWLTISLAETNRTPFDFAEGESELVSGFNVEYSSGGFALIFMAEYASILFMSMLFCVIFLGCDVFNLLFYVKLTFISFVFIWARGTLPRFRYDKLMYLAWKCFLSFSLNYLLFFIGFKILLFSFL</sequence>
<dbReference type="EC" id="7.1.1.2"/>
<dbReference type="EMBL" id="EU189432">
    <property type="protein sequence ID" value="ABW37424.1"/>
    <property type="molecule type" value="Genomic_DNA"/>
</dbReference>
<dbReference type="EMBL" id="U07327">
    <property type="protein sequence ID" value="AAA76660.1"/>
    <property type="molecule type" value="Genomic_DNA"/>
</dbReference>
<dbReference type="EMBL" id="U07328">
    <property type="protein sequence ID" value="AAA76661.1"/>
    <property type="status" value="ALT_INIT"/>
    <property type="molecule type" value="Genomic_DNA"/>
</dbReference>
<dbReference type="EMBL" id="BK006337">
    <property type="protein sequence ID" value="DAA06220.1"/>
    <property type="molecule type" value="Genomic_DNA"/>
</dbReference>
<dbReference type="SMR" id="P84294"/>
<dbReference type="STRING" id="7234.P84294"/>
<dbReference type="Proteomes" id="UP000008744">
    <property type="component" value="Mitochondrion"/>
</dbReference>
<dbReference type="GO" id="GO:0005743">
    <property type="term" value="C:mitochondrial inner membrane"/>
    <property type="evidence" value="ECO:0007669"/>
    <property type="project" value="UniProtKB-SubCell"/>
</dbReference>
<dbReference type="GO" id="GO:0008137">
    <property type="term" value="F:NADH dehydrogenase (ubiquinone) activity"/>
    <property type="evidence" value="ECO:0007669"/>
    <property type="project" value="UniProtKB-EC"/>
</dbReference>
<dbReference type="GO" id="GO:0009060">
    <property type="term" value="P:aerobic respiration"/>
    <property type="evidence" value="ECO:0007669"/>
    <property type="project" value="TreeGrafter"/>
</dbReference>
<dbReference type="HAMAP" id="MF_01350">
    <property type="entry name" value="NDH1_NuoH"/>
    <property type="match status" value="1"/>
</dbReference>
<dbReference type="InterPro" id="IPR001694">
    <property type="entry name" value="NADH_UbQ_OxRdtase_su1/FPO"/>
</dbReference>
<dbReference type="InterPro" id="IPR018086">
    <property type="entry name" value="NADH_UbQ_OxRdtase_su1_CS"/>
</dbReference>
<dbReference type="PANTHER" id="PTHR11432">
    <property type="entry name" value="NADH DEHYDROGENASE SUBUNIT 1"/>
    <property type="match status" value="1"/>
</dbReference>
<dbReference type="PANTHER" id="PTHR11432:SF3">
    <property type="entry name" value="NADH-UBIQUINONE OXIDOREDUCTASE CHAIN 1"/>
    <property type="match status" value="1"/>
</dbReference>
<dbReference type="Pfam" id="PF00146">
    <property type="entry name" value="NADHdh"/>
    <property type="match status" value="1"/>
</dbReference>
<dbReference type="PROSITE" id="PS00667">
    <property type="entry name" value="COMPLEX1_ND1_1"/>
    <property type="match status" value="1"/>
</dbReference>
<dbReference type="PROSITE" id="PS00668">
    <property type="entry name" value="COMPLEX1_ND1_2"/>
    <property type="match status" value="1"/>
</dbReference>
<evidence type="ECO:0000250" key="1"/>
<evidence type="ECO:0000255" key="2"/>
<evidence type="ECO:0000305" key="3"/>
<comment type="function">
    <text evidence="1">Core subunit of the mitochondrial membrane respiratory chain NADH dehydrogenase (Complex I) that is believed to belong to the minimal assembly required for catalysis. Complex I functions in the transfer of electrons from NADH to the respiratory chain. The immediate electron acceptor for the enzyme is believed to be ubiquinone (By similarity).</text>
</comment>
<comment type="catalytic activity">
    <reaction>
        <text>a ubiquinone + NADH + 5 H(+)(in) = a ubiquinol + NAD(+) + 4 H(+)(out)</text>
        <dbReference type="Rhea" id="RHEA:29091"/>
        <dbReference type="Rhea" id="RHEA-COMP:9565"/>
        <dbReference type="Rhea" id="RHEA-COMP:9566"/>
        <dbReference type="ChEBI" id="CHEBI:15378"/>
        <dbReference type="ChEBI" id="CHEBI:16389"/>
        <dbReference type="ChEBI" id="CHEBI:17976"/>
        <dbReference type="ChEBI" id="CHEBI:57540"/>
        <dbReference type="ChEBI" id="CHEBI:57945"/>
        <dbReference type="EC" id="7.1.1.2"/>
    </reaction>
</comment>
<comment type="subcellular location">
    <subcellularLocation>
        <location evidence="1">Mitochondrion inner membrane</location>
        <topology evidence="1">Multi-pass membrane protein</topology>
    </subcellularLocation>
</comment>
<comment type="similarity">
    <text evidence="3">Belongs to the complex I subunit 1 family.</text>
</comment>
<comment type="sequence caution" evidence="3">
    <conflict type="erroneous initiation">
        <sequence resource="EMBL-CDS" id="AAA76661"/>
    </conflict>
    <text>Truncated N-terminus.</text>
</comment>
<accession>P84294</accession>
<accession>A8W3Q1</accession>
<accession>C9QNT7</accession>
<accession>P51933</accession>
<accession>P51935</accession>
<accession>P51936</accession>
<accession>Q34339</accession>
<accession>Q34366</accession>
<accession>Q34370</accession>